<proteinExistence type="inferred from homology"/>
<keyword id="KW-1003">Cell membrane</keyword>
<keyword id="KW-0472">Membrane</keyword>
<keyword id="KW-0812">Transmembrane</keyword>
<keyword id="KW-1133">Transmembrane helix</keyword>
<comment type="subcellular location">
    <subcellularLocation>
        <location evidence="1">Cell membrane</location>
        <topology evidence="1">Multi-pass membrane protein</topology>
    </subcellularLocation>
</comment>
<comment type="similarity">
    <text evidence="1">Belongs to the UPF0391 family.</text>
</comment>
<name>Y050_ACIBY</name>
<accession>B0VA17</accession>
<sequence length="52" mass="5462">MFRWAIIFAVIALIASLLGFGGVAGLSKDFAVILLVIAVILAVIGFISRGRT</sequence>
<dbReference type="EMBL" id="CU459141">
    <property type="protein sequence ID" value="CAM85039.1"/>
    <property type="molecule type" value="Genomic_DNA"/>
</dbReference>
<dbReference type="RefSeq" id="WP_000490267.1">
    <property type="nucleotide sequence ID" value="NZ_JBDGFB010000004.1"/>
</dbReference>
<dbReference type="EnsemblBacteria" id="CAM85039">
    <property type="protein sequence ID" value="CAM85039"/>
    <property type="gene ID" value="ABAYE0050"/>
</dbReference>
<dbReference type="KEGG" id="aby:ABAYE0050"/>
<dbReference type="HOGENOM" id="CLU_187346_2_0_6"/>
<dbReference type="GO" id="GO:0005886">
    <property type="term" value="C:plasma membrane"/>
    <property type="evidence" value="ECO:0007669"/>
    <property type="project" value="UniProtKB-SubCell"/>
</dbReference>
<dbReference type="HAMAP" id="MF_01361">
    <property type="entry name" value="UPF0391"/>
    <property type="match status" value="1"/>
</dbReference>
<dbReference type="InterPro" id="IPR009760">
    <property type="entry name" value="DUF1328"/>
</dbReference>
<dbReference type="NCBIfam" id="NF010227">
    <property type="entry name" value="PRK13682.1-2"/>
    <property type="match status" value="1"/>
</dbReference>
<dbReference type="NCBIfam" id="NF010229">
    <property type="entry name" value="PRK13682.1-4"/>
    <property type="match status" value="1"/>
</dbReference>
<dbReference type="Pfam" id="PF07043">
    <property type="entry name" value="DUF1328"/>
    <property type="match status" value="1"/>
</dbReference>
<dbReference type="PIRSF" id="PIRSF036466">
    <property type="entry name" value="UCP036466"/>
    <property type="match status" value="1"/>
</dbReference>
<protein>
    <recommendedName>
        <fullName evidence="1">UPF0391 membrane protein ABAYE0050</fullName>
    </recommendedName>
</protein>
<reference key="1">
    <citation type="journal article" date="2008" name="PLoS ONE">
        <title>Comparative analysis of Acinetobacters: three genomes for three lifestyles.</title>
        <authorList>
            <person name="Vallenet D."/>
            <person name="Nordmann P."/>
            <person name="Barbe V."/>
            <person name="Poirel L."/>
            <person name="Mangenot S."/>
            <person name="Bataille E."/>
            <person name="Dossat C."/>
            <person name="Gas S."/>
            <person name="Kreimeyer A."/>
            <person name="Lenoble P."/>
            <person name="Oztas S."/>
            <person name="Poulain J."/>
            <person name="Segurens B."/>
            <person name="Robert C."/>
            <person name="Abergel C."/>
            <person name="Claverie J.-M."/>
            <person name="Raoult D."/>
            <person name="Medigue C."/>
            <person name="Weissenbach J."/>
            <person name="Cruveiller S."/>
        </authorList>
    </citation>
    <scope>NUCLEOTIDE SEQUENCE [LARGE SCALE GENOMIC DNA]</scope>
    <source>
        <strain>AYE</strain>
    </source>
</reference>
<organism>
    <name type="scientific">Acinetobacter baumannii (strain AYE)</name>
    <dbReference type="NCBI Taxonomy" id="509173"/>
    <lineage>
        <taxon>Bacteria</taxon>
        <taxon>Pseudomonadati</taxon>
        <taxon>Pseudomonadota</taxon>
        <taxon>Gammaproteobacteria</taxon>
        <taxon>Moraxellales</taxon>
        <taxon>Moraxellaceae</taxon>
        <taxon>Acinetobacter</taxon>
        <taxon>Acinetobacter calcoaceticus/baumannii complex</taxon>
    </lineage>
</organism>
<evidence type="ECO:0000255" key="1">
    <source>
        <dbReference type="HAMAP-Rule" id="MF_01361"/>
    </source>
</evidence>
<feature type="chain" id="PRO_1000143703" description="UPF0391 membrane protein ABAYE0050">
    <location>
        <begin position="1"/>
        <end position="52"/>
    </location>
</feature>
<feature type="transmembrane region" description="Helical" evidence="1">
    <location>
        <begin position="6"/>
        <end position="26"/>
    </location>
</feature>
<feature type="transmembrane region" description="Helical" evidence="1">
    <location>
        <begin position="30"/>
        <end position="50"/>
    </location>
</feature>
<gene>
    <name type="ordered locus">ABAYE0050</name>
</gene>